<evidence type="ECO:0000250" key="1"/>
<evidence type="ECO:0000255" key="2"/>
<evidence type="ECO:0000255" key="3">
    <source>
        <dbReference type="PROSITE-ProRule" id="PRU00521"/>
    </source>
</evidence>
<evidence type="ECO:0000269" key="4">
    <source>
    </source>
</evidence>
<evidence type="ECO:0000269" key="5">
    <source>
    </source>
</evidence>
<evidence type="ECO:0000269" key="6">
    <source>
    </source>
</evidence>
<evidence type="ECO:0000269" key="7">
    <source>
    </source>
</evidence>
<evidence type="ECO:0000269" key="8">
    <source>
    </source>
</evidence>
<evidence type="ECO:0000269" key="9">
    <source ref="5"/>
</evidence>
<evidence type="ECO:0000305" key="10">
    <source>
    </source>
</evidence>
<evidence type="ECO:0007829" key="11">
    <source>
        <dbReference type="PDB" id="9IJE"/>
    </source>
</evidence>
<dbReference type="EMBL" id="M29932">
    <property type="protein sequence ID" value="AAA35550.1"/>
    <property type="status" value="ALT_TERM"/>
    <property type="molecule type" value="Genomic_DNA"/>
</dbReference>
<dbReference type="EMBL" id="X72861">
    <property type="protein sequence ID" value="CAA51383.1"/>
    <property type="molecule type" value="Genomic_DNA"/>
</dbReference>
<dbReference type="EMBL" id="X70811">
    <property type="protein sequence ID" value="CAA50141.1"/>
    <property type="molecule type" value="mRNA"/>
</dbReference>
<dbReference type="EMBL" id="X70812">
    <property type="protein sequence ID" value="CAA50142.1"/>
    <property type="status" value="ALT_SEQ"/>
    <property type="molecule type" value="Genomic_DNA"/>
</dbReference>
<dbReference type="EMBL" id="X70812">
    <property type="protein sequence ID" value="CAA50143.1"/>
    <property type="status" value="ALT_SEQ"/>
    <property type="molecule type" value="Genomic_DNA"/>
</dbReference>
<dbReference type="EMBL" id="AY487247">
    <property type="protein sequence ID" value="AAR37414.1"/>
    <property type="molecule type" value="mRNA"/>
</dbReference>
<dbReference type="EMBL" id="DQ104441">
    <property type="protein sequence ID" value="AAY88743.1"/>
    <property type="molecule type" value="Genomic_DNA"/>
</dbReference>
<dbReference type="EMBL" id="BC075017">
    <property type="protein sequence ID" value="AAH75017.1"/>
    <property type="molecule type" value="mRNA"/>
</dbReference>
<dbReference type="EMBL" id="S53291">
    <property type="protein sequence ID" value="AAB24837.1"/>
    <property type="molecule type" value="mRNA"/>
</dbReference>
<dbReference type="CCDS" id="CCDS6099.1"/>
<dbReference type="PIR" id="I57941">
    <property type="entry name" value="I57941"/>
</dbReference>
<dbReference type="PIR" id="S33751">
    <property type="entry name" value="QRHUBE"/>
</dbReference>
<dbReference type="RefSeq" id="NP_000016.1">
    <property type="nucleotide sequence ID" value="NM_000025.3"/>
</dbReference>
<dbReference type="PDB" id="9IJD">
    <property type="method" value="EM"/>
    <property type="resolution" value="2.76 A"/>
    <property type="chains" value="R=42-362"/>
</dbReference>
<dbReference type="PDB" id="9IJE">
    <property type="method" value="EM"/>
    <property type="resolution" value="2.34 A"/>
    <property type="chains" value="R=42-362"/>
</dbReference>
<dbReference type="PDBsum" id="9IJD"/>
<dbReference type="PDBsum" id="9IJE"/>
<dbReference type="EMDB" id="EMD-60628"/>
<dbReference type="EMDB" id="EMD-60629"/>
<dbReference type="SMR" id="P13945"/>
<dbReference type="BioGRID" id="106664">
    <property type="interactions" value="3"/>
</dbReference>
<dbReference type="CORUM" id="P13945"/>
<dbReference type="DIP" id="DIP-61451N"/>
<dbReference type="FunCoup" id="P13945">
    <property type="interactions" value="741"/>
</dbReference>
<dbReference type="IntAct" id="P13945">
    <property type="interactions" value="7"/>
</dbReference>
<dbReference type="MINT" id="P13945"/>
<dbReference type="STRING" id="9606.ENSP00000343782"/>
<dbReference type="BindingDB" id="P13945"/>
<dbReference type="ChEMBL" id="CHEMBL246"/>
<dbReference type="DrugBank" id="DB01001">
    <property type="generic name" value="Albuterol"/>
</dbReference>
<dbReference type="DrugBank" id="DB00866">
    <property type="generic name" value="Alprenolol"/>
</dbReference>
<dbReference type="DrugBank" id="DB05395">
    <property type="generic name" value="Amibegron"/>
</dbReference>
<dbReference type="DrugBank" id="DB01118">
    <property type="generic name" value="Amiodarone"/>
</dbReference>
<dbReference type="DrugBank" id="DB00182">
    <property type="generic name" value="Amphetamine"/>
</dbReference>
<dbReference type="DrugBank" id="DB01102">
    <property type="generic name" value="Arbutamine"/>
</dbReference>
<dbReference type="DrugBank" id="DB05343">
    <property type="generic name" value="Arundic acid"/>
</dbReference>
<dbReference type="DrugBank" id="DB00217">
    <property type="generic name" value="Bethanidine"/>
</dbReference>
<dbReference type="DrugBank" id="DB00901">
    <property type="generic name" value="Bitolterol"/>
</dbReference>
<dbReference type="DrugBank" id="DB08807">
    <property type="generic name" value="Bopindolol"/>
</dbReference>
<dbReference type="DrugBank" id="DB06726">
    <property type="generic name" value="Bufuralol"/>
</dbReference>
<dbReference type="DrugBank" id="DB08808">
    <property type="generic name" value="Bupranolol"/>
</dbReference>
<dbReference type="DrugBank" id="DB04846">
    <property type="generic name" value="Celiprolol"/>
</dbReference>
<dbReference type="DrugBank" id="DB01407">
    <property type="generic name" value="Clenbuterol"/>
</dbReference>
<dbReference type="DrugBank" id="DB00785">
    <property type="generic name" value="Cryptenamine"/>
</dbReference>
<dbReference type="DrugBank" id="DB11273">
    <property type="generic name" value="Dihydroergocornine"/>
</dbReference>
<dbReference type="DrugBank" id="DB13345">
    <property type="generic name" value="Dihydroergocristine"/>
</dbReference>
<dbReference type="DrugBank" id="DB00320">
    <property type="generic name" value="Dihydroergotamine"/>
</dbReference>
<dbReference type="DrugBank" id="DB11278">
    <property type="generic name" value="DL-Methylephedrine"/>
</dbReference>
<dbReference type="DrugBank" id="DB06262">
    <property type="generic name" value="Droxidopa"/>
</dbReference>
<dbReference type="DrugBank" id="DB13757">
    <property type="generic name" value="Epanolol"/>
</dbReference>
<dbReference type="DrugBank" id="DB01363">
    <property type="generic name" value="Ephedra sinica root"/>
</dbReference>
<dbReference type="DrugBank" id="DB01049">
    <property type="generic name" value="Ergoloid mesylate"/>
</dbReference>
<dbReference type="DrugBank" id="DB01288">
    <property type="generic name" value="Fenoterol"/>
</dbReference>
<dbReference type="DrugBank" id="DB00983">
    <property type="generic name" value="Formoterol"/>
</dbReference>
<dbReference type="DrugBank" id="DB01064">
    <property type="generic name" value="Isoprenaline"/>
</dbReference>
<dbReference type="DrugBank" id="DB12858">
    <property type="generic name" value="LY-377604"/>
</dbReference>
<dbReference type="DrugBank" id="DB01365">
    <property type="generic name" value="Mephentermine"/>
</dbReference>
<dbReference type="DrugBank" id="DB13530">
    <property type="generic name" value="Mepindolol"/>
</dbReference>
<dbReference type="DrugBank" id="DB00264">
    <property type="generic name" value="Metoprolol"/>
</dbReference>
<dbReference type="DrugBank" id="DB08893">
    <property type="generic name" value="Mirabegron"/>
</dbReference>
<dbReference type="DrugBank" id="DB05981">
    <property type="generic name" value="MN-246"/>
</dbReference>
<dbReference type="DrugBank" id="DB04861">
    <property type="generic name" value="Nebivolol"/>
</dbReference>
<dbReference type="DrugBank" id="DB00368">
    <property type="generic name" value="Norepinephrine"/>
</dbReference>
<dbReference type="DrugBank" id="DB00540">
    <property type="generic name" value="Nortriptyline"/>
</dbReference>
<dbReference type="DrugBank" id="DB00334">
    <property type="generic name" value="Olanzapine"/>
</dbReference>
<dbReference type="DrugBank" id="DB16112">
    <property type="generic name" value="OT-730"/>
</dbReference>
<dbReference type="DrugBank" id="DB01580">
    <property type="generic name" value="Oxprenolol"/>
</dbReference>
<dbReference type="DrugBank" id="DB00715">
    <property type="generic name" value="Paroxetine"/>
</dbReference>
<dbReference type="DrugBank" id="DB00960">
    <property type="generic name" value="Pindolol"/>
</dbReference>
<dbReference type="DrugBank" id="DB13777">
    <property type="generic name" value="Prenalterol"/>
</dbReference>
<dbReference type="DrugBank" id="DB00571">
    <property type="generic name" value="Propranolol"/>
</dbReference>
<dbReference type="DrugBank" id="DB02733">
    <property type="generic name" value="Purvalanol"/>
</dbReference>
<dbReference type="DrugBank" id="DB06483">
    <property type="generic name" value="PW2101"/>
</dbReference>
<dbReference type="DrugBank" id="DB11124">
    <property type="generic name" value="Racepinephrine"/>
</dbReference>
<dbReference type="DrugBank" id="DB13559">
    <property type="generic name" value="Rimiterol"/>
</dbReference>
<dbReference type="DrugBank" id="DB12080">
    <property type="generic name" value="Ritobegron"/>
</dbReference>
<dbReference type="DrugBank" id="DB00867">
    <property type="generic name" value="Ritodrine"/>
</dbReference>
<dbReference type="DrugBank" id="DB00938">
    <property type="generic name" value="Salmeterol"/>
</dbReference>
<dbReference type="DrugBank" id="DB06190">
    <property type="generic name" value="Solabegron"/>
</dbReference>
<dbReference type="DrugBank" id="DB00871">
    <property type="generic name" value="Terbutaline"/>
</dbReference>
<dbReference type="DrugBank" id="DB00376">
    <property type="generic name" value="Trihexyphenidyl"/>
</dbReference>
<dbReference type="DrugBank" id="DB00726">
    <property type="generic name" value="Trimipramine"/>
</dbReference>
<dbReference type="DrugBank" id="DB14895">
    <property type="generic name" value="Vibegron"/>
</dbReference>
<dbReference type="DrugBank" id="DB13781">
    <property type="generic name" value="Xamoterol"/>
</dbReference>
<dbReference type="DrugCentral" id="P13945"/>
<dbReference type="GuidetoPHARMACOLOGY" id="30"/>
<dbReference type="GlyCosmos" id="P13945">
    <property type="glycosylation" value="2 sites, No reported glycans"/>
</dbReference>
<dbReference type="GlyGen" id="P13945">
    <property type="glycosylation" value="3 sites"/>
</dbReference>
<dbReference type="PhosphoSitePlus" id="P13945"/>
<dbReference type="SwissPalm" id="P13945"/>
<dbReference type="BioMuta" id="ADRB3"/>
<dbReference type="DMDM" id="461604"/>
<dbReference type="PaxDb" id="9606-ENSP00000343782"/>
<dbReference type="Antibodypedia" id="10846">
    <property type="antibodies" value="399 antibodies from 37 providers"/>
</dbReference>
<dbReference type="DNASU" id="155"/>
<dbReference type="Ensembl" id="ENST00000345060.5">
    <property type="protein sequence ID" value="ENSP00000343782.3"/>
    <property type="gene ID" value="ENSG00000188778.6"/>
</dbReference>
<dbReference type="GeneID" id="155"/>
<dbReference type="KEGG" id="hsa:155"/>
<dbReference type="MANE-Select" id="ENST00000345060.5">
    <property type="protein sequence ID" value="ENSP00000343782.3"/>
    <property type="RefSeq nucleotide sequence ID" value="NM_000025.3"/>
    <property type="RefSeq protein sequence ID" value="NP_000016.1"/>
</dbReference>
<dbReference type="UCSC" id="uc003xkr.3">
    <property type="organism name" value="human"/>
</dbReference>
<dbReference type="AGR" id="HGNC:288"/>
<dbReference type="CTD" id="155"/>
<dbReference type="DisGeNET" id="155"/>
<dbReference type="GeneCards" id="ADRB3"/>
<dbReference type="HGNC" id="HGNC:288">
    <property type="gene designation" value="ADRB3"/>
</dbReference>
<dbReference type="HPA" id="ENSG00000188778">
    <property type="expression patterns" value="Tissue enhanced (fallopian tube, ovary, urinary bladder)"/>
</dbReference>
<dbReference type="MalaCards" id="ADRB3"/>
<dbReference type="MIM" id="109691">
    <property type="type" value="gene"/>
</dbReference>
<dbReference type="neXtProt" id="NX_P13945"/>
<dbReference type="OpenTargets" id="ENSG00000188778"/>
<dbReference type="PharmGKB" id="PA24598"/>
<dbReference type="VEuPathDB" id="HostDB:ENSG00000188778"/>
<dbReference type="eggNOG" id="KOG3656">
    <property type="taxonomic scope" value="Eukaryota"/>
</dbReference>
<dbReference type="GeneTree" id="ENSGT00940000158663"/>
<dbReference type="HOGENOM" id="CLU_009579_11_0_1"/>
<dbReference type="InParanoid" id="P13945"/>
<dbReference type="OMA" id="CAFASNI"/>
<dbReference type="OrthoDB" id="5983033at2759"/>
<dbReference type="PAN-GO" id="P13945">
    <property type="GO annotations" value="5 GO annotations based on evolutionary models"/>
</dbReference>
<dbReference type="PhylomeDB" id="P13945"/>
<dbReference type="TreeFam" id="TF316350"/>
<dbReference type="PathwayCommons" id="P13945"/>
<dbReference type="Reactome" id="R-HSA-390696">
    <property type="pathway name" value="Adrenoceptors"/>
</dbReference>
<dbReference type="Reactome" id="R-HSA-418555">
    <property type="pathway name" value="G alpha (s) signalling events"/>
</dbReference>
<dbReference type="SignaLink" id="P13945"/>
<dbReference type="SIGNOR" id="P13945"/>
<dbReference type="BioGRID-ORCS" id="155">
    <property type="hits" value="19 hits in 1167 CRISPR screens"/>
</dbReference>
<dbReference type="GeneWiki" id="Beta-3_adrenergic_receptor"/>
<dbReference type="GenomeRNAi" id="155"/>
<dbReference type="Pharos" id="P13945">
    <property type="development level" value="Tclin"/>
</dbReference>
<dbReference type="PRO" id="PR:P13945"/>
<dbReference type="Proteomes" id="UP000005640">
    <property type="component" value="Chromosome 8"/>
</dbReference>
<dbReference type="RNAct" id="P13945">
    <property type="molecule type" value="protein"/>
</dbReference>
<dbReference type="Bgee" id="ENSG00000188778">
    <property type="expression patterns" value="Expressed in right ovary and 57 other cell types or tissues"/>
</dbReference>
<dbReference type="ExpressionAtlas" id="P13945">
    <property type="expression patterns" value="baseline and differential"/>
</dbReference>
<dbReference type="GO" id="GO:0005886">
    <property type="term" value="C:plasma membrane"/>
    <property type="evidence" value="ECO:0000318"/>
    <property type="project" value="GO_Central"/>
</dbReference>
<dbReference type="GO" id="GO:0043235">
    <property type="term" value="C:receptor complex"/>
    <property type="evidence" value="ECO:0000314"/>
    <property type="project" value="HGNC-UCL"/>
</dbReference>
<dbReference type="GO" id="GO:0031699">
    <property type="term" value="F:beta-3 adrenergic receptor binding"/>
    <property type="evidence" value="ECO:0007669"/>
    <property type="project" value="Ensembl"/>
</dbReference>
<dbReference type="GO" id="GO:0004939">
    <property type="term" value="F:beta-adrenergic receptor activity"/>
    <property type="evidence" value="ECO:0000314"/>
    <property type="project" value="HGNC-UCL"/>
</dbReference>
<dbReference type="GO" id="GO:0015052">
    <property type="term" value="F:beta3-adrenergic receptor activity"/>
    <property type="evidence" value="ECO:0000315"/>
    <property type="project" value="HGNC-UCL"/>
</dbReference>
<dbReference type="GO" id="GO:0051379">
    <property type="term" value="F:epinephrine binding"/>
    <property type="evidence" value="ECO:0000318"/>
    <property type="project" value="GO_Central"/>
</dbReference>
<dbReference type="GO" id="GO:0051380">
    <property type="term" value="F:norepinephrine binding"/>
    <property type="evidence" value="ECO:0007669"/>
    <property type="project" value="Ensembl"/>
</dbReference>
<dbReference type="GO" id="GO:0042803">
    <property type="term" value="F:protein homodimerization activity"/>
    <property type="evidence" value="ECO:0000314"/>
    <property type="project" value="HGNC-UCL"/>
</dbReference>
<dbReference type="GO" id="GO:0071880">
    <property type="term" value="P:adenylate cyclase-activating adrenergic receptor signaling pathway"/>
    <property type="evidence" value="ECO:0000314"/>
    <property type="project" value="HGNC-UCL"/>
</dbReference>
<dbReference type="GO" id="GO:0007188">
    <property type="term" value="P:adenylate cyclase-modulating G protein-coupled receptor signaling pathway"/>
    <property type="evidence" value="ECO:0000304"/>
    <property type="project" value="ProtInc"/>
</dbReference>
<dbReference type="GO" id="GO:0050873">
    <property type="term" value="P:brown fat cell differentiation"/>
    <property type="evidence" value="ECO:0007669"/>
    <property type="project" value="Ensembl"/>
</dbReference>
<dbReference type="GO" id="GO:0005975">
    <property type="term" value="P:carbohydrate metabolic process"/>
    <property type="evidence" value="ECO:0000304"/>
    <property type="project" value="ProtInc"/>
</dbReference>
<dbReference type="GO" id="GO:0002024">
    <property type="term" value="P:diet induced thermogenesis"/>
    <property type="evidence" value="ECO:0007669"/>
    <property type="project" value="Ensembl"/>
</dbReference>
<dbReference type="GO" id="GO:0042755">
    <property type="term" value="P:eating behavior"/>
    <property type="evidence" value="ECO:0007669"/>
    <property type="project" value="Ensembl"/>
</dbReference>
<dbReference type="GO" id="GO:0006112">
    <property type="term" value="P:energy reserve metabolic process"/>
    <property type="evidence" value="ECO:0000304"/>
    <property type="project" value="ProtInc"/>
</dbReference>
<dbReference type="GO" id="GO:0007187">
    <property type="term" value="P:G protein-coupled receptor signaling pathway, coupled to cyclic nucleotide second messenger"/>
    <property type="evidence" value="ECO:0000304"/>
    <property type="project" value="ProtInc"/>
</dbReference>
<dbReference type="GO" id="GO:0006091">
    <property type="term" value="P:generation of precursor metabolites and energy"/>
    <property type="evidence" value="ECO:0000304"/>
    <property type="project" value="ProtInc"/>
</dbReference>
<dbReference type="GO" id="GO:0031649">
    <property type="term" value="P:heat generation"/>
    <property type="evidence" value="ECO:0007669"/>
    <property type="project" value="Ensembl"/>
</dbReference>
<dbReference type="GO" id="GO:0040015">
    <property type="term" value="P:negative regulation of multicellular organism growth"/>
    <property type="evidence" value="ECO:0007669"/>
    <property type="project" value="Ensembl"/>
</dbReference>
<dbReference type="GO" id="GO:0002025">
    <property type="term" value="P:norepinephrine-epinephrine-mediated vasodilation involved in regulation of systemic arterial blood pressure"/>
    <property type="evidence" value="ECO:0000318"/>
    <property type="project" value="GO_Central"/>
</dbReference>
<dbReference type="GO" id="GO:0120162">
    <property type="term" value="P:positive regulation of cold-induced thermogenesis"/>
    <property type="evidence" value="ECO:0000250"/>
    <property type="project" value="YuBioLab"/>
</dbReference>
<dbReference type="GO" id="GO:0043410">
    <property type="term" value="P:positive regulation of MAPK cascade"/>
    <property type="evidence" value="ECO:0000314"/>
    <property type="project" value="HGNC-UCL"/>
</dbReference>
<dbReference type="GO" id="GO:0009409">
    <property type="term" value="P:response to cold"/>
    <property type="evidence" value="ECO:0007669"/>
    <property type="project" value="Ensembl"/>
</dbReference>
<dbReference type="Gene3D" id="1.20.1070.10">
    <property type="entry name" value="Rhodopsin 7-helix transmembrane proteins"/>
    <property type="match status" value="1"/>
</dbReference>
<dbReference type="InterPro" id="IPR002233">
    <property type="entry name" value="ADR_fam"/>
</dbReference>
<dbReference type="InterPro" id="IPR000681">
    <property type="entry name" value="ADRB3_rcpt"/>
</dbReference>
<dbReference type="InterPro" id="IPR000276">
    <property type="entry name" value="GPCR_Rhodpsn"/>
</dbReference>
<dbReference type="InterPro" id="IPR017452">
    <property type="entry name" value="GPCR_Rhodpsn_7TM"/>
</dbReference>
<dbReference type="PANTHER" id="PTHR24248">
    <property type="entry name" value="ADRENERGIC RECEPTOR-RELATED G-PROTEIN COUPLED RECEPTOR"/>
    <property type="match status" value="1"/>
</dbReference>
<dbReference type="PANTHER" id="PTHR24248:SF3">
    <property type="entry name" value="BETA-3 ADRENERGIC RECEPTOR"/>
    <property type="match status" value="1"/>
</dbReference>
<dbReference type="Pfam" id="PF00001">
    <property type="entry name" value="7tm_1"/>
    <property type="match status" value="1"/>
</dbReference>
<dbReference type="PRINTS" id="PR01103">
    <property type="entry name" value="ADRENERGICR"/>
</dbReference>
<dbReference type="PRINTS" id="PR00563">
    <property type="entry name" value="ADRENRGCB3AR"/>
</dbReference>
<dbReference type="PRINTS" id="PR00237">
    <property type="entry name" value="GPCRRHODOPSN"/>
</dbReference>
<dbReference type="SMART" id="SM01381">
    <property type="entry name" value="7TM_GPCR_Srsx"/>
    <property type="match status" value="1"/>
</dbReference>
<dbReference type="SUPFAM" id="SSF81321">
    <property type="entry name" value="Family A G protein-coupled receptor-like"/>
    <property type="match status" value="1"/>
</dbReference>
<dbReference type="PROSITE" id="PS00237">
    <property type="entry name" value="G_PROTEIN_RECEP_F1_1"/>
    <property type="match status" value="1"/>
</dbReference>
<dbReference type="PROSITE" id="PS50262">
    <property type="entry name" value="G_PROTEIN_RECEP_F1_2"/>
    <property type="match status" value="1"/>
</dbReference>
<sequence>MAPWPHENSSLAPWPDLPTLAPNTANTSGLPGVPWEAALAGALLALAVLATVGGNLLVIVAIAWTPRLQTMTNVFVTSLAAADLVMGLLVVPPAATLALTGHWPLGATGCELWTSVDVLCVTASIETLCALAVDRYLAVTNPLRYGALVTKRCARTAVVLVWVVSAAVSFAPIMSQWWRVGADAEAQRCHSNPRCCAFASNMPYVLLSSSVSFYLPLLVMLFVYARVFVVATRQLRLLRGELGRFPPEESPPAPSRSLAPAPVGTCAPPEGVPACGRRPARLLPLREHRALCTLGLIMGTFTLCWLPFFLANVLRALGGPSLVPGPAFLALNWLGYANSAFNPLIYCRSPDFRSAFRRLLCRCGRRLPPEPCAAARPALFPSGVPAARSSPAQPRLCQRLDGASWGVS</sequence>
<organism>
    <name type="scientific">Homo sapiens</name>
    <name type="common">Human</name>
    <dbReference type="NCBI Taxonomy" id="9606"/>
    <lineage>
        <taxon>Eukaryota</taxon>
        <taxon>Metazoa</taxon>
        <taxon>Chordata</taxon>
        <taxon>Craniata</taxon>
        <taxon>Vertebrata</taxon>
        <taxon>Euteleostomi</taxon>
        <taxon>Mammalia</taxon>
        <taxon>Eutheria</taxon>
        <taxon>Euarchontoglires</taxon>
        <taxon>Primates</taxon>
        <taxon>Haplorrhini</taxon>
        <taxon>Catarrhini</taxon>
        <taxon>Hominidae</taxon>
        <taxon>Homo</taxon>
    </lineage>
</organism>
<name>ADRB3_HUMAN</name>
<proteinExistence type="evidence at protein level"/>
<protein>
    <recommendedName>
        <fullName>Beta-3 adrenergic receptor</fullName>
    </recommendedName>
    <alternativeName>
        <fullName>Beta-3 adrenoreceptor</fullName>
        <shortName>Beta-3 adrenoceptor</shortName>
    </alternativeName>
</protein>
<gene>
    <name type="primary">ADRB3</name>
    <name type="synonym">ADRB3R</name>
    <name type="synonym">B3AR</name>
</gene>
<comment type="function">
    <text>Beta-adrenergic receptors mediate the catecholamine-induced activation of adenylate cyclase through the action of G proteins. Beta-3 is involved in the regulation of lipolysis and thermogenesis.</text>
</comment>
<comment type="subunit">
    <text evidence="5">Interacts with ARRDC3.</text>
</comment>
<comment type="subcellular location">
    <subcellularLocation>
        <location>Cell membrane</location>
        <topology>Multi-pass membrane protein</topology>
    </subcellularLocation>
</comment>
<comment type="tissue specificity">
    <text>Expressed mainly in adipose tissues.</text>
</comment>
<comment type="polymorphism">
    <text evidence="8 10">The variant Arg-64 seems to be associated with weight gain (obesity) and is also associated with susceptibility to non-insulin-dependent diabetes mellitus (NIDDM).</text>
</comment>
<comment type="similarity">
    <text evidence="3">Belongs to the G-protein coupled receptor 1 family. Adrenergic receptor subfamily. ADRB3 sub-subfamily.</text>
</comment>
<keyword id="KW-0002">3D-structure</keyword>
<keyword id="KW-1003">Cell membrane</keyword>
<keyword id="KW-0219">Diabetes mellitus</keyword>
<keyword id="KW-1015">Disulfide bond</keyword>
<keyword id="KW-0297">G-protein coupled receptor</keyword>
<keyword id="KW-0325">Glycoprotein</keyword>
<keyword id="KW-0449">Lipoprotein</keyword>
<keyword id="KW-0472">Membrane</keyword>
<keyword id="KW-0550">Obesity</keyword>
<keyword id="KW-0564">Palmitate</keyword>
<keyword id="KW-0675">Receptor</keyword>
<keyword id="KW-1185">Reference proteome</keyword>
<keyword id="KW-0807">Transducer</keyword>
<keyword id="KW-0812">Transmembrane</keyword>
<keyword id="KW-1133">Transmembrane helix</keyword>
<feature type="chain" id="PRO_0000069143" description="Beta-3 adrenergic receptor">
    <location>
        <begin position="1"/>
        <end position="408"/>
    </location>
</feature>
<feature type="topological domain" description="Extracellular" evidence="1">
    <location>
        <begin position="1"/>
        <end position="36"/>
    </location>
</feature>
<feature type="transmembrane region" description="Helical; Name=1" evidence="1">
    <location>
        <begin position="37"/>
        <end position="63"/>
    </location>
</feature>
<feature type="topological domain" description="Cytoplasmic" evidence="1">
    <location>
        <begin position="64"/>
        <end position="72"/>
    </location>
</feature>
<feature type="transmembrane region" description="Helical; Name=2" evidence="1">
    <location>
        <begin position="73"/>
        <end position="91"/>
    </location>
</feature>
<feature type="topological domain" description="Extracellular" evidence="1">
    <location>
        <begin position="92"/>
        <end position="111"/>
    </location>
</feature>
<feature type="transmembrane region" description="Helical; Name=3" evidence="1">
    <location>
        <begin position="112"/>
        <end position="133"/>
    </location>
</feature>
<feature type="topological domain" description="Cytoplasmic" evidence="1">
    <location>
        <begin position="134"/>
        <end position="155"/>
    </location>
</feature>
<feature type="transmembrane region" description="Helical; Name=4" evidence="1">
    <location>
        <begin position="156"/>
        <end position="178"/>
    </location>
</feature>
<feature type="topological domain" description="Extracellular" evidence="1">
    <location>
        <begin position="179"/>
        <end position="203"/>
    </location>
</feature>
<feature type="transmembrane region" description="Helical; Name=5" evidence="1">
    <location>
        <begin position="204"/>
        <end position="225"/>
    </location>
</feature>
<feature type="topological domain" description="Cytoplasmic" evidence="1">
    <location>
        <begin position="226"/>
        <end position="292"/>
    </location>
</feature>
<feature type="transmembrane region" description="Helical; Name=6" evidence="1">
    <location>
        <begin position="293"/>
        <end position="314"/>
    </location>
</feature>
<feature type="topological domain" description="Extracellular" evidence="1">
    <location>
        <begin position="315"/>
        <end position="326"/>
    </location>
</feature>
<feature type="transmembrane region" description="Helical; Name=7" evidence="1">
    <location>
        <begin position="327"/>
        <end position="347"/>
    </location>
</feature>
<feature type="topological domain" description="Cytoplasmic" evidence="1">
    <location>
        <begin position="348"/>
        <end position="408"/>
    </location>
</feature>
<feature type="lipid moiety-binding region" description="S-palmitoyl cysteine" evidence="1">
    <location>
        <position position="361"/>
    </location>
</feature>
<feature type="glycosylation site" description="N-linked (GlcNAc...) asparagine" evidence="2">
    <location>
        <position position="8"/>
    </location>
</feature>
<feature type="glycosylation site" description="N-linked (GlcNAc...) asparagine" evidence="2">
    <location>
        <position position="26"/>
    </location>
</feature>
<feature type="disulfide bond" evidence="3">
    <location>
        <begin position="110"/>
        <end position="196"/>
    </location>
</feature>
<feature type="disulfide bond" evidence="3">
    <location>
        <begin position="189"/>
        <end position="195"/>
    </location>
</feature>
<feature type="sequence variant" id="VAR_003456" description="In dbSNP:rs4994." evidence="4 6 7 8 9">
    <original>W</original>
    <variation>R</variation>
    <location>
        <position position="64"/>
    </location>
</feature>
<feature type="sequence variant" id="VAR_029205" description="In dbSNP:rs28364012.">
    <original>E</original>
    <variation>K</variation>
    <location>
        <position position="249"/>
    </location>
</feature>
<feature type="sequence variant" id="VAR_014166" description="In dbSNP:rs4995." evidence="4">
    <original>T</original>
    <variation>M</variation>
    <location>
        <position position="265"/>
    </location>
</feature>
<feature type="sequence variant" id="VAR_025102" description="In dbSNP:rs36031925." evidence="9">
    <original>R</original>
    <variation>C</variation>
    <location>
        <position position="353"/>
    </location>
</feature>
<feature type="helix" evidence="11">
    <location>
        <begin position="43"/>
        <end position="64"/>
    </location>
</feature>
<feature type="helix" evidence="11">
    <location>
        <begin position="72"/>
        <end position="89"/>
    </location>
</feature>
<feature type="helix" evidence="11">
    <location>
        <begin position="91"/>
        <end position="100"/>
    </location>
</feature>
<feature type="helix" evidence="11">
    <location>
        <begin position="107"/>
        <end position="140"/>
    </location>
</feature>
<feature type="turn" evidence="11">
    <location>
        <begin position="142"/>
        <end position="144"/>
    </location>
</feature>
<feature type="helix" evidence="11">
    <location>
        <begin position="145"/>
        <end position="148"/>
    </location>
</feature>
<feature type="helix" evidence="11">
    <location>
        <begin position="151"/>
        <end position="174"/>
    </location>
</feature>
<feature type="helix" evidence="11">
    <location>
        <begin position="203"/>
        <end position="212"/>
    </location>
</feature>
<feature type="helix" evidence="11">
    <location>
        <begin position="214"/>
        <end position="242"/>
    </location>
</feature>
<feature type="helix" evidence="11">
    <location>
        <begin position="290"/>
        <end position="316"/>
    </location>
</feature>
<feature type="helix" evidence="11">
    <location>
        <begin position="320"/>
        <end position="322"/>
    </location>
</feature>
<feature type="helix" evidence="11">
    <location>
        <begin position="325"/>
        <end position="336"/>
    </location>
</feature>
<feature type="helix" evidence="11">
    <location>
        <begin position="338"/>
        <end position="346"/>
    </location>
</feature>
<feature type="helix" evidence="11">
    <location>
        <begin position="350"/>
        <end position="361"/>
    </location>
</feature>
<reference key="1">
    <citation type="journal article" date="1989" name="Science">
        <title>Molecular characterization of the human beta 3-adrenergic receptor.</title>
        <authorList>
            <person name="Emorine L.J."/>
            <person name="Marullo S."/>
            <person name="Briend-Sutren M.-M."/>
            <person name="Patey G."/>
            <person name="Tate K."/>
            <person name="Delavier-Klutchko C."/>
            <person name="Strosberg A.D."/>
        </authorList>
    </citation>
    <scope>NUCLEOTIDE SEQUENCE [GENOMIC DNA]</scope>
</reference>
<reference key="2">
    <citation type="journal article" date="1993" name="Eur. J. Biochem.">
        <title>The promoter and intron/exon structure of the human and mouse beta 3-adrenergic-receptor genes.</title>
        <authorList>
            <person name="van Spronsen A."/>
            <person name="Nahmias C."/>
            <person name="Krief S."/>
            <person name="Briend-Sutren M.-M."/>
            <person name="Strosberg A.D."/>
            <person name="Emorine L.J."/>
        </authorList>
    </citation>
    <scope>NUCLEOTIDE SEQUENCE [GENOMIC DNA]</scope>
    <scope>SEQUENCE REVISION</scope>
</reference>
<reference key="3">
    <citation type="journal article" date="1993" name="FEBS Lett.">
        <title>Molecular cloning of a human beta 3-adrenergic receptor cDNA.</title>
        <authorList>
            <person name="Lelias J.M."/>
            <person name="Kaghad M."/>
            <person name="Rodriguez M."/>
            <person name="Chalon P."/>
            <person name="Bonnin J."/>
            <person name="Dupre I."/>
            <person name="Delpech B."/>
            <person name="Bensaid M."/>
            <person name="Lefur G."/>
            <person name="Ferrara P."/>
            <person name="Caput D."/>
        </authorList>
    </citation>
    <scope>NUCLEOTIDE SEQUENCE [MRNA]</scope>
</reference>
<reference key="4">
    <citation type="submission" date="2003-11" db="EMBL/GenBank/DDBJ databases">
        <title>cDNA clones of human proteins involved in signal transduction sequenced by the Guthrie cDNA resource center (www.cdna.org).</title>
        <authorList>
            <person name="Kopatz S.A."/>
            <person name="Aronstam R.S."/>
            <person name="Sharma S.V."/>
        </authorList>
    </citation>
    <scope>NUCLEOTIDE SEQUENCE [LARGE SCALE MRNA]</scope>
    <source>
        <tissue>Placenta</tissue>
    </source>
</reference>
<reference key="5">
    <citation type="submission" date="2005-06" db="EMBL/GenBank/DDBJ databases">
        <authorList>
            <consortium name="SeattleSNPs variation discovery resource"/>
        </authorList>
    </citation>
    <scope>NUCLEOTIDE SEQUENCE [GENOMIC DNA]</scope>
    <scope>VARIANTS ARG-64 AND CYS-353</scope>
</reference>
<reference key="6">
    <citation type="journal article" date="2004" name="Genome Res.">
        <title>The status, quality, and expansion of the NIH full-length cDNA project: the Mammalian Gene Collection (MGC).</title>
        <authorList>
            <consortium name="The MGC Project Team"/>
        </authorList>
    </citation>
    <scope>NUCLEOTIDE SEQUENCE [LARGE SCALE MRNA]</scope>
</reference>
<reference key="7">
    <citation type="journal article" date="1992" name="Mol. Pharmacol.">
        <title>Rodent and human beta 3-adrenergic receptor genes contain an intron within the protein-coding block.</title>
        <authorList>
            <person name="Granneman J.G."/>
            <person name="Lahners K.N."/>
            <person name="Rao D.D."/>
        </authorList>
    </citation>
    <scope>NUCLEOTIDE SEQUENCE [MRNA] OF 392-408</scope>
</reference>
<reference key="8">
    <citation type="journal article" date="2011" name="Cell Metab.">
        <title>The arrestin domain-containing 3 protein regulates body mass and energy expenditure.</title>
        <authorList>
            <person name="Patwari P."/>
            <person name="Emilsson V."/>
            <person name="Schadt E.E."/>
            <person name="Chutkow W.A."/>
            <person name="Lee S."/>
            <person name="Marsili A."/>
            <person name="Zhang Y."/>
            <person name="Dobrin R."/>
            <person name="Cohen D.E."/>
            <person name="Larsen P.R."/>
            <person name="Zavacki A.M."/>
            <person name="Fong L.G."/>
            <person name="Young S.G."/>
            <person name="Lee R.T."/>
        </authorList>
    </citation>
    <scope>INTERACTION WITH ARRDC3</scope>
</reference>
<reference key="9">
    <citation type="journal article" date="1995" name="N. Engl. J. Med.">
        <title>Genetic variation in the beta 3-adrenergic receptor and an increased capacity to gain weight in patients with morbid obesity.</title>
        <authorList>
            <person name="Clement K."/>
            <person name="Vaisse C."/>
            <person name="Manning B.S.J."/>
            <person name="Basdevant A."/>
            <person name="Guy-Grand B."/>
            <person name="Ruiz J."/>
            <person name="Silver K.D."/>
            <person name="Shuldiner A.R."/>
            <person name="Froguel P."/>
            <person name="Strosberg A.D."/>
        </authorList>
    </citation>
    <scope>VARIANT ARG-64</scope>
</reference>
<reference key="10">
    <citation type="journal article" date="1996" name="Diabetologia">
        <title>Association of Trp64Arg mutation of the beta3-adrenergic-receptor with NIDDM and body weight gain.</title>
        <authorList>
            <person name="Fujisawa T."/>
            <person name="Ikegami H."/>
            <person name="Yamato E."/>
            <person name="Takekawa K."/>
            <person name="Nakagawa Y."/>
            <person name="Hamada Y."/>
            <person name="Oga T."/>
            <person name="Ueda H."/>
            <person name="Shintani M."/>
            <person name="Fukuda M."/>
            <person name="Ogihara T."/>
        </authorList>
    </citation>
    <scope>VARIANT ARG-64</scope>
</reference>
<reference key="11">
    <citation type="journal article" date="1996" name="Endocrinology">
        <title>Pharmacological characterization of a recently described human beta 3-adrenergic receptor mutant.</title>
        <authorList>
            <person name="Candelore M.R."/>
            <person name="Deng L."/>
            <person name="Tota L.M."/>
            <person name="Kelly L.J."/>
            <person name="Cascieri M.A."/>
            <person name="Strader C.D."/>
        </authorList>
    </citation>
    <scope>VARIANT ARG-64</scope>
</reference>
<reference key="12">
    <citation type="journal article" date="1999" name="Nat. Genet.">
        <title>Patterns of single-nucleotide polymorphisms in candidate genes for blood-pressure homeostasis.</title>
        <authorList>
            <person name="Halushka M.K."/>
            <person name="Fan J.-B."/>
            <person name="Bentley K."/>
            <person name="Hsie L."/>
            <person name="Shen N."/>
            <person name="Weder A."/>
            <person name="Cooper R."/>
            <person name="Lipshutz R."/>
            <person name="Chakravarti A."/>
        </authorList>
    </citation>
    <scope>VARIANTS ARG-64 AND MET-265</scope>
</reference>
<accession>P13945</accession>
<accession>Q4JFT4</accession>